<keyword id="KW-0963">Cytoplasm</keyword>
<keyword id="KW-0396">Initiation factor</keyword>
<keyword id="KW-0648">Protein biosynthesis</keyword>
<keyword id="KW-1185">Reference proteome</keyword>
<keyword id="KW-0694">RNA-binding</keyword>
<keyword id="KW-0699">rRNA-binding</keyword>
<sequence length="72" mass="8193">MAKEDTIQMQGEVLENLPSATFKIKLENGHVVLGHISGKMRMHYIRILPGDKVTVELTPYDLSRARIVFRAK</sequence>
<gene>
    <name evidence="1" type="primary">infA2</name>
    <name type="ordered locus">CV_4165</name>
</gene>
<feature type="chain" id="PRO_0000095774" description="Translation initiation factor IF-1 2">
    <location>
        <begin position="1"/>
        <end position="72"/>
    </location>
</feature>
<feature type="domain" description="S1-like" evidence="1">
    <location>
        <begin position="1"/>
        <end position="72"/>
    </location>
</feature>
<dbReference type="EMBL" id="AE016825">
    <property type="protein sequence ID" value="AAQ61825.1"/>
    <property type="status" value="ALT_INIT"/>
    <property type="molecule type" value="Genomic_DNA"/>
</dbReference>
<dbReference type="SMR" id="Q7NQH3"/>
<dbReference type="STRING" id="243365.CV_4165"/>
<dbReference type="KEGG" id="cvi:CV_4165"/>
<dbReference type="eggNOG" id="COG0361">
    <property type="taxonomic scope" value="Bacteria"/>
</dbReference>
<dbReference type="HOGENOM" id="CLU_151267_1_0_4"/>
<dbReference type="OrthoDB" id="9803250at2"/>
<dbReference type="Proteomes" id="UP000001424">
    <property type="component" value="Chromosome"/>
</dbReference>
<dbReference type="GO" id="GO:0005829">
    <property type="term" value="C:cytosol"/>
    <property type="evidence" value="ECO:0007669"/>
    <property type="project" value="TreeGrafter"/>
</dbReference>
<dbReference type="GO" id="GO:0043022">
    <property type="term" value="F:ribosome binding"/>
    <property type="evidence" value="ECO:0007669"/>
    <property type="project" value="UniProtKB-UniRule"/>
</dbReference>
<dbReference type="GO" id="GO:0019843">
    <property type="term" value="F:rRNA binding"/>
    <property type="evidence" value="ECO:0007669"/>
    <property type="project" value="UniProtKB-UniRule"/>
</dbReference>
<dbReference type="GO" id="GO:0003743">
    <property type="term" value="F:translation initiation factor activity"/>
    <property type="evidence" value="ECO:0007669"/>
    <property type="project" value="UniProtKB-UniRule"/>
</dbReference>
<dbReference type="CDD" id="cd04451">
    <property type="entry name" value="S1_IF1"/>
    <property type="match status" value="1"/>
</dbReference>
<dbReference type="FunFam" id="2.40.50.140:FF:000002">
    <property type="entry name" value="Translation initiation factor IF-1"/>
    <property type="match status" value="1"/>
</dbReference>
<dbReference type="Gene3D" id="2.40.50.140">
    <property type="entry name" value="Nucleic acid-binding proteins"/>
    <property type="match status" value="1"/>
</dbReference>
<dbReference type="HAMAP" id="MF_00075">
    <property type="entry name" value="IF_1"/>
    <property type="match status" value="1"/>
</dbReference>
<dbReference type="InterPro" id="IPR012340">
    <property type="entry name" value="NA-bd_OB-fold"/>
</dbReference>
<dbReference type="InterPro" id="IPR006196">
    <property type="entry name" value="RNA-binding_domain_S1_IF1"/>
</dbReference>
<dbReference type="InterPro" id="IPR004368">
    <property type="entry name" value="TIF_IF1"/>
</dbReference>
<dbReference type="NCBIfam" id="TIGR00008">
    <property type="entry name" value="infA"/>
    <property type="match status" value="1"/>
</dbReference>
<dbReference type="PANTHER" id="PTHR33370">
    <property type="entry name" value="TRANSLATION INITIATION FACTOR IF-1, CHLOROPLASTIC"/>
    <property type="match status" value="1"/>
</dbReference>
<dbReference type="PANTHER" id="PTHR33370:SF1">
    <property type="entry name" value="TRANSLATION INITIATION FACTOR IF-1, CHLOROPLASTIC"/>
    <property type="match status" value="1"/>
</dbReference>
<dbReference type="Pfam" id="PF01176">
    <property type="entry name" value="eIF-1a"/>
    <property type="match status" value="1"/>
</dbReference>
<dbReference type="SUPFAM" id="SSF50249">
    <property type="entry name" value="Nucleic acid-binding proteins"/>
    <property type="match status" value="1"/>
</dbReference>
<dbReference type="PROSITE" id="PS50832">
    <property type="entry name" value="S1_IF1_TYPE"/>
    <property type="match status" value="1"/>
</dbReference>
<comment type="function">
    <text evidence="1">One of the essential components for the initiation of protein synthesis. Stabilizes the binding of IF-2 and IF-3 on the 30S subunit to which N-formylmethionyl-tRNA(fMet) subsequently binds. Helps modulate mRNA selection, yielding the 30S pre-initiation complex (PIC). Upon addition of the 50S ribosomal subunit IF-1, IF-2 and IF-3 are released leaving the mature 70S translation initiation complex.</text>
</comment>
<comment type="subunit">
    <text evidence="1">Component of the 30S ribosomal translation pre-initiation complex which assembles on the 30S ribosome in the order IF-2 and IF-3, IF-1 and N-formylmethionyl-tRNA(fMet); mRNA recruitment can occur at any time during PIC assembly.</text>
</comment>
<comment type="subcellular location">
    <subcellularLocation>
        <location evidence="1">Cytoplasm</location>
    </subcellularLocation>
</comment>
<comment type="similarity">
    <text evidence="1">Belongs to the IF-1 family.</text>
</comment>
<comment type="sequence caution" evidence="2">
    <conflict type="erroneous initiation">
        <sequence resource="EMBL-CDS" id="AAQ61825"/>
    </conflict>
    <text>Truncated N-terminus.</text>
</comment>
<reference key="1">
    <citation type="journal article" date="2003" name="Proc. Natl. Acad. Sci. U.S.A.">
        <title>The complete genome sequence of Chromobacterium violaceum reveals remarkable and exploitable bacterial adaptability.</title>
        <authorList>
            <person name="Vasconcelos A.T.R."/>
            <person name="de Almeida D.F."/>
            <person name="Hungria M."/>
            <person name="Guimaraes C.T."/>
            <person name="Antonio R.V."/>
            <person name="Almeida F.C."/>
            <person name="de Almeida L.G.P."/>
            <person name="de Almeida R."/>
            <person name="Alves-Gomes J.A."/>
            <person name="Andrade E.M."/>
            <person name="Araripe J."/>
            <person name="de Araujo M.F.F."/>
            <person name="Astolfi-Filho S."/>
            <person name="Azevedo V."/>
            <person name="Baptista A.J."/>
            <person name="Bataus L.A.M."/>
            <person name="Batista J.S."/>
            <person name="Belo A."/>
            <person name="van den Berg C."/>
            <person name="Bogo M."/>
            <person name="Bonatto S."/>
            <person name="Bordignon J."/>
            <person name="Brigido M.M."/>
            <person name="Brito C.A."/>
            <person name="Brocchi M."/>
            <person name="Burity H.A."/>
            <person name="Camargo A.A."/>
            <person name="Cardoso D.D.P."/>
            <person name="Carneiro N.P."/>
            <person name="Carraro D.M."/>
            <person name="Carvalho C.M.B."/>
            <person name="Cascardo J.C.M."/>
            <person name="Cavada B.S."/>
            <person name="Chueire L.M.O."/>
            <person name="Creczynski-Pasa T.B."/>
            <person name="Cunha-Junior N.C."/>
            <person name="Fagundes N."/>
            <person name="Falcao C.L."/>
            <person name="Fantinatti F."/>
            <person name="Farias I.P."/>
            <person name="Felipe M.S.S."/>
            <person name="Ferrari L.P."/>
            <person name="Ferro J.A."/>
            <person name="Ferro M.I.T."/>
            <person name="Franco G.R."/>
            <person name="Freitas N.S.A."/>
            <person name="Furlan L.R."/>
            <person name="Gazzinelli R.T."/>
            <person name="Gomes E.A."/>
            <person name="Goncalves P.R."/>
            <person name="Grangeiro T.B."/>
            <person name="Grattapaglia D."/>
            <person name="Grisard E.C."/>
            <person name="Hanna E.S."/>
            <person name="Jardim S.N."/>
            <person name="Laurino J."/>
            <person name="Leoi L.C.T."/>
            <person name="Lima L.F.A."/>
            <person name="Loureiro M.F."/>
            <person name="Lyra M.C.C.P."/>
            <person name="Madeira H.M.F."/>
            <person name="Manfio G.P."/>
            <person name="Maranhao A.Q."/>
            <person name="Martins W.S."/>
            <person name="di Mauro S.M.Z."/>
            <person name="de Medeiros S.R.B."/>
            <person name="Meissner R.V."/>
            <person name="Moreira M.A.M."/>
            <person name="Nascimento F.F."/>
            <person name="Nicolas M.F."/>
            <person name="Oliveira J.G."/>
            <person name="Oliveira S.C."/>
            <person name="Paixao R.F.C."/>
            <person name="Parente J.A."/>
            <person name="Pedrosa F.O."/>
            <person name="Pena S.D.J."/>
            <person name="Pereira J.O."/>
            <person name="Pereira M."/>
            <person name="Pinto L.S.R.C."/>
            <person name="Pinto L.S."/>
            <person name="Porto J.I.R."/>
            <person name="Potrich D.P."/>
            <person name="Ramalho-Neto C.E."/>
            <person name="Reis A.M.M."/>
            <person name="Rigo L.U."/>
            <person name="Rondinelli E."/>
            <person name="Santos E.B.P."/>
            <person name="Santos F.R."/>
            <person name="Schneider M.P.C."/>
            <person name="Seuanez H.N."/>
            <person name="Silva A.M.R."/>
            <person name="da Silva A.L.C."/>
            <person name="Silva D.W."/>
            <person name="Silva R."/>
            <person name="Simoes I.C."/>
            <person name="Simon D."/>
            <person name="Soares C.M.A."/>
            <person name="Soares R.B.A."/>
            <person name="Souza E.M."/>
            <person name="Souza K.R.L."/>
            <person name="Souza R.C."/>
            <person name="Steffens M.B.R."/>
            <person name="Steindel M."/>
            <person name="Teixeira S.R."/>
            <person name="Urmenyi T."/>
            <person name="Vettore A."/>
            <person name="Wassem R."/>
            <person name="Zaha A."/>
            <person name="Simpson A.J.G."/>
        </authorList>
    </citation>
    <scope>NUCLEOTIDE SEQUENCE [LARGE SCALE GENOMIC DNA]</scope>
    <source>
        <strain>ATCC 12472 / DSM 30191 / JCM 1249 / CCUG 213 / NBRC 12614 / NCIMB 9131 / NCTC 9757 / MK</strain>
    </source>
</reference>
<proteinExistence type="inferred from homology"/>
<evidence type="ECO:0000255" key="1">
    <source>
        <dbReference type="HAMAP-Rule" id="MF_00075"/>
    </source>
</evidence>
<evidence type="ECO:0000305" key="2"/>
<name>IF12_CHRVO</name>
<protein>
    <recommendedName>
        <fullName evidence="1">Translation initiation factor IF-1 2</fullName>
    </recommendedName>
</protein>
<accession>Q7NQH3</accession>
<organism>
    <name type="scientific">Chromobacterium violaceum (strain ATCC 12472 / DSM 30191 / JCM 1249 / CCUG 213 / NBRC 12614 / NCIMB 9131 / NCTC 9757 / MK)</name>
    <dbReference type="NCBI Taxonomy" id="243365"/>
    <lineage>
        <taxon>Bacteria</taxon>
        <taxon>Pseudomonadati</taxon>
        <taxon>Pseudomonadota</taxon>
        <taxon>Betaproteobacteria</taxon>
        <taxon>Neisseriales</taxon>
        <taxon>Chromobacteriaceae</taxon>
        <taxon>Chromobacterium</taxon>
    </lineage>
</organism>